<gene>
    <name type="primary">Adamts1</name>
</gene>
<sequence length="967" mass="105706">MQPEVPLGSGKLKPCSDMGDIQRAAKFRSSQSAHMLLLLLASITMLLCVRGAHGRPTEEDEELVLPSLERARGHDSTTLLRLDAFGQQLHLKLQPDSGFLAPGFTLQTVGRSPGSEAQHLDPTGDLAHCFYSGTVNGDPSSAAALSLCEGVRGAFYLQGEEFFIQPAPAVATERLVPAEPKEESIAPPRFHILRRRRRGSGGAKCGVMDEETLPTSNSGRESQNTPDQWPLRNPTPQGAGKPTGPGSIRKKRFVSSPRYVETMLVADQSMADFHGSGLKHYLLTLFSVAARFYKHPSIRNSISLVVVKILVIYEEQKGPEVTSNAALTLRNFCSWQKQHNSPSDRDPEHYDTAILFTRQDLCGSHTCDTLGMADVGTVCDPSRSCSVIEDDGLQAAFTTAHELGHVFNMPHDDAKHCASFNGVSGDSHLMASMLSSLDHSQPWSPCSAYMVTSFLDNGHGECLMDKPQNPIKLPSDLPGTLYDANRQCQFTFGEESTHCPDAASTCSTLWCTGTSGGLLVCQTKHFPWADGTSCGEGKWCVSGKCVNKTDMKHFATPVHGSWGPWGPWGDCSRTCGGGVQYTMRECDNPVPKNGGKYCEGKRVRYRSCNIEDCPDNNGKTFREEQCEAHNEFSKASFGNEPTVEWTPKYAGVSPKDRCKLTCEAKGIGYFFVLQPKVVDGTPCSPDSTSVCVQGQCVKAGCDRIIDSKKKFDKCGVCGGNGSTCKKISGTVTSTRPGYHDIVTIPAGATNIEVKHRNPRGSRNNGSFLAIRAADGTYILNGNFTLSTLEQDLTYKGTVLRYSGSSAALERIRSFSPLKEPLTIQVLMVGHALRPKIKYTYFMKKKTEPFNAIPTFSEWVIEEWGECSKTCGSGWQRRVVECRDINGHPASECAKEVKPASTRPCADLPCPRWQVGDWSPCSKTCGKGYKKRTLKCLSHDGGVLSNESCDPLKKPKHYIDFCILTQCS</sequence>
<reference key="1">
    <citation type="submission" date="1999-05" db="EMBL/GenBank/DDBJ databases">
        <title>Induction of a disintegrin and metalloprotease with the thrombospondin type I motif (ADAMTS).</title>
        <authorList>
            <person name="Liu X."/>
            <person name="Tu Y."/>
            <person name="Yin T."/>
            <person name="Johnstone E.M."/>
            <person name="Stephenson D.T."/>
            <person name="Clemens J.A."/>
            <person name="Little S.P."/>
        </authorList>
    </citation>
    <scope>NUCLEOTIDE SEQUENCE [MRNA]</scope>
    <source>
        <strain>Sprague-Dawley</strain>
        <tissue>Brain</tissue>
    </source>
</reference>
<reference key="2">
    <citation type="journal article" date="2000" name="Liver">
        <title>Cloning of the rat ADAMTS-1 gene and its down regulation in endothelial cells in cirrhotic rats.</title>
        <authorList>
            <person name="Diamantis I."/>
            <person name="Luethi M."/>
            <person name="Hoesli M."/>
            <person name="Reichen J."/>
        </authorList>
    </citation>
    <scope>NUCLEOTIDE SEQUENCE [MRNA] OF 18-967</scope>
    <source>
        <strain>Sprague-Dawley</strain>
        <tissue>Liver</tissue>
    </source>
</reference>
<keyword id="KW-0106">Calcium</keyword>
<keyword id="KW-0165">Cleavage on pair of basic residues</keyword>
<keyword id="KW-1015">Disulfide bond</keyword>
<keyword id="KW-0272">Extracellular matrix</keyword>
<keyword id="KW-0325">Glycoprotein</keyword>
<keyword id="KW-0358">Heparin-binding</keyword>
<keyword id="KW-0378">Hydrolase</keyword>
<keyword id="KW-0479">Metal-binding</keyword>
<keyword id="KW-0482">Metalloprotease</keyword>
<keyword id="KW-0645">Protease</keyword>
<keyword id="KW-1185">Reference proteome</keyword>
<keyword id="KW-0677">Repeat</keyword>
<keyword id="KW-0964">Secreted</keyword>
<keyword id="KW-0732">Signal</keyword>
<keyword id="KW-0862">Zinc</keyword>
<keyword id="KW-0865">Zymogen</keyword>
<comment type="function">
    <text evidence="2 3">Metalloprotease which cleaves aggrecan, a cartilage proteoglycan, at the '1683-Glu-|-Leu-1684' site (within the chondroitin sulfate attachment domain), and may be involved in its turnover. Also cleaves COMP. Has angiogenic inhibitor activity. May play a critical role in follicular rupture.</text>
</comment>
<comment type="cofactor">
    <cofactor evidence="3">
        <name>Zn(2+)</name>
        <dbReference type="ChEBI" id="CHEBI:29105"/>
    </cofactor>
    <text evidence="3">Binds 1 zinc ion per subunit.</text>
</comment>
<comment type="subcellular location">
    <subcellularLocation>
        <location evidence="1">Secreted</location>
        <location evidence="1">Extracellular space</location>
        <location evidence="1">Extracellular matrix</location>
    </subcellularLocation>
</comment>
<comment type="induction">
    <text>Down-regulated in endothelial cells derived from cirrhotic liver.</text>
</comment>
<comment type="domain">
    <text>The spacer domain and the TSP type-1 domains are important for a tight interaction with the extracellular matrix.</text>
</comment>
<comment type="domain">
    <text>The conserved cysteine present in the cysteine-switch motif binds the catalytic zinc ion, thus inhibiting the enzyme. The dissociation of the cysteine from the zinc ion upon the activation-peptide release activates the enzyme.</text>
</comment>
<comment type="PTM">
    <text evidence="1">The precursor is cleaved by a furin endopeptidase.</text>
</comment>
<comment type="PTM">
    <text evidence="1">Glycosylated. Can be O-fucosylated by POFUT2 on a serine or a threonine residue found within the consensus sequence C1-X(2)-(S/T)-C2-G of the TSP type-1 repeat domains where C1 and C2 are the first and second cysteine residue of the repeat, respectively. Fucosylated repeats can then be further glycosylated by the addition of a beta-1,3-glucose residue by the glucosyltransferase, B3GALTL. Fucosylation mediates the efficient secretion of ADAMTS family members. Can also be C-glycosylated with one or two mannose molecules on tryptophan residues within the consensus sequence W-X-X-W of the TPRs, and N-glycosylated. These other glycosylations can also facilitate secretion (By similarity).</text>
</comment>
<protein>
    <recommendedName>
        <fullName>A disintegrin and metalloproteinase with thrombospondin motifs 1</fullName>
        <shortName>ADAM-TS 1</shortName>
        <shortName>ADAM-TS1</shortName>
        <shortName>ADAMTS-1</shortName>
        <ecNumber>3.4.24.-</ecNumber>
    </recommendedName>
</protein>
<proteinExistence type="evidence at transcript level"/>
<evidence type="ECO:0000250" key="1"/>
<evidence type="ECO:0000250" key="2">
    <source>
        <dbReference type="UniProtKB" id="P97857"/>
    </source>
</evidence>
<evidence type="ECO:0000250" key="3">
    <source>
        <dbReference type="UniProtKB" id="Q9UHI8"/>
    </source>
</evidence>
<evidence type="ECO:0000255" key="4"/>
<evidence type="ECO:0000255" key="5">
    <source>
        <dbReference type="PROSITE-ProRule" id="PRU00210"/>
    </source>
</evidence>
<evidence type="ECO:0000255" key="6">
    <source>
        <dbReference type="PROSITE-ProRule" id="PRU00276"/>
    </source>
</evidence>
<evidence type="ECO:0000255" key="7">
    <source>
        <dbReference type="PROSITE-ProRule" id="PRU10095"/>
    </source>
</evidence>
<evidence type="ECO:0000256" key="8">
    <source>
        <dbReference type="SAM" id="MobiDB-lite"/>
    </source>
</evidence>
<evidence type="ECO:0000305" key="9"/>
<feature type="signal peptide" evidence="4">
    <location>
        <begin position="1"/>
        <end position="54"/>
    </location>
</feature>
<feature type="propeptide" id="PRO_0000029154" evidence="1">
    <location>
        <begin position="55"/>
        <end position="252"/>
    </location>
</feature>
<feature type="chain" id="PRO_0000029155" description="A disintegrin and metalloproteinase with thrombospondin motifs 1">
    <location>
        <begin position="253"/>
        <end position="967"/>
    </location>
</feature>
<feature type="domain" description="Peptidase M12B" evidence="6">
    <location>
        <begin position="258"/>
        <end position="467"/>
    </location>
</feature>
<feature type="domain" description="Disintegrin">
    <location>
        <begin position="476"/>
        <end position="558"/>
    </location>
</feature>
<feature type="domain" description="TSP type-1 1" evidence="5">
    <location>
        <begin position="559"/>
        <end position="614"/>
    </location>
</feature>
<feature type="domain" description="TSP type-1 2" evidence="5">
    <location>
        <begin position="854"/>
        <end position="910"/>
    </location>
</feature>
<feature type="domain" description="TSP type-1 3" evidence="5">
    <location>
        <begin position="911"/>
        <end position="967"/>
    </location>
</feature>
<feature type="region of interest" description="Disordered" evidence="8">
    <location>
        <begin position="198"/>
        <end position="252"/>
    </location>
</feature>
<feature type="region of interest" description="Spacer">
    <location>
        <begin position="725"/>
        <end position="857"/>
    </location>
</feature>
<feature type="short sequence motif" description="Cysteine switch" evidence="1">
    <location>
        <begin position="203"/>
        <end position="210"/>
    </location>
</feature>
<feature type="compositionally biased region" description="Polar residues" evidence="8">
    <location>
        <begin position="213"/>
        <end position="227"/>
    </location>
</feature>
<feature type="active site" evidence="6 7">
    <location>
        <position position="402"/>
    </location>
</feature>
<feature type="binding site" description="in inhibited form" evidence="1">
    <location>
        <position position="205"/>
    </location>
    <ligand>
        <name>Zn(2+)</name>
        <dbReference type="ChEBI" id="CHEBI:29105"/>
        <note>catalytic</note>
    </ligand>
</feature>
<feature type="binding site" evidence="3">
    <location>
        <position position="261"/>
    </location>
    <ligand>
        <name>Ca(2+)</name>
        <dbReference type="ChEBI" id="CHEBI:29108"/>
        <label>1</label>
    </ligand>
</feature>
<feature type="binding site" evidence="3">
    <location>
        <position position="261"/>
    </location>
    <ligand>
        <name>Ca(2+)</name>
        <dbReference type="ChEBI" id="CHEBI:29108"/>
        <label>2</label>
    </ligand>
</feature>
<feature type="binding site" evidence="3">
    <location>
        <position position="344"/>
    </location>
    <ligand>
        <name>Ca(2+)</name>
        <dbReference type="ChEBI" id="CHEBI:29108"/>
        <label>1</label>
    </ligand>
</feature>
<feature type="binding site" evidence="3">
    <location>
        <position position="344"/>
    </location>
    <ligand>
        <name>Ca(2+)</name>
        <dbReference type="ChEBI" id="CHEBI:29108"/>
        <label>2</label>
    </ligand>
</feature>
<feature type="binding site" evidence="3">
    <location>
        <position position="351"/>
    </location>
    <ligand>
        <name>Ca(2+)</name>
        <dbReference type="ChEBI" id="CHEBI:29108"/>
        <label>1</label>
    </ligand>
</feature>
<feature type="binding site" evidence="3">
    <location>
        <position position="401"/>
    </location>
    <ligand>
        <name>Zn(2+)</name>
        <dbReference type="ChEBI" id="CHEBI:29105"/>
        <note>catalytic</note>
    </ligand>
</feature>
<feature type="binding site" evidence="3">
    <location>
        <position position="405"/>
    </location>
    <ligand>
        <name>Zn(2+)</name>
        <dbReference type="ChEBI" id="CHEBI:29105"/>
        <note>catalytic</note>
    </ligand>
</feature>
<feature type="binding site" evidence="3">
    <location>
        <position position="411"/>
    </location>
    <ligand>
        <name>Zn(2+)</name>
        <dbReference type="ChEBI" id="CHEBI:29105"/>
        <note>catalytic</note>
    </ligand>
</feature>
<feature type="binding site" evidence="3">
    <location>
        <position position="462"/>
    </location>
    <ligand>
        <name>Ca(2+)</name>
        <dbReference type="ChEBI" id="CHEBI:29108"/>
        <label>1</label>
    </ligand>
</feature>
<feature type="binding site" evidence="3">
    <location>
        <position position="465"/>
    </location>
    <ligand>
        <name>Ca(2+)</name>
        <dbReference type="ChEBI" id="CHEBI:29108"/>
        <label>1</label>
    </ligand>
</feature>
<feature type="binding site" evidence="3">
    <location>
        <position position="465"/>
    </location>
    <ligand>
        <name>Ca(2+)</name>
        <dbReference type="ChEBI" id="CHEBI:29108"/>
        <label>2</label>
    </ligand>
</feature>
<feature type="glycosylation site" description="N-linked (GlcNAc...) asparagine" evidence="4">
    <location>
        <position position="547"/>
    </location>
</feature>
<feature type="glycosylation site" description="N-linked (GlcNAc...) asparagine" evidence="4">
    <location>
        <position position="720"/>
    </location>
</feature>
<feature type="glycosylation site" description="N-linked (GlcNAc...) asparagine" evidence="4">
    <location>
        <position position="764"/>
    </location>
</feature>
<feature type="glycosylation site" description="N-linked (GlcNAc...) asparagine" evidence="4">
    <location>
        <position position="782"/>
    </location>
</feature>
<feature type="glycosylation site" description="N-linked (GlcNAc...) asparagine" evidence="4">
    <location>
        <position position="945"/>
    </location>
</feature>
<feature type="disulfide bond" evidence="3">
    <location>
        <begin position="333"/>
        <end position="385"/>
    </location>
</feature>
<feature type="disulfide bond" evidence="3">
    <location>
        <begin position="362"/>
        <end position="367"/>
    </location>
</feature>
<feature type="disulfide bond" evidence="3">
    <location>
        <begin position="379"/>
        <end position="462"/>
    </location>
</feature>
<feature type="disulfide bond" evidence="3">
    <location>
        <begin position="417"/>
        <end position="446"/>
    </location>
</feature>
<feature type="disulfide bond" evidence="3">
    <location>
        <begin position="488"/>
        <end position="511"/>
    </location>
</feature>
<feature type="disulfide bond" evidence="3">
    <location>
        <begin position="499"/>
        <end position="521"/>
    </location>
</feature>
<feature type="disulfide bond" evidence="3">
    <location>
        <begin position="506"/>
        <end position="540"/>
    </location>
</feature>
<feature type="disulfide bond" evidence="3">
    <location>
        <begin position="534"/>
        <end position="545"/>
    </location>
</feature>
<feature type="disulfide bond" evidence="1">
    <location>
        <begin position="571"/>
        <end position="608"/>
    </location>
</feature>
<feature type="disulfide bond" evidence="1">
    <location>
        <begin position="575"/>
        <end position="613"/>
    </location>
</feature>
<feature type="disulfide bond" evidence="1">
    <location>
        <begin position="586"/>
        <end position="598"/>
    </location>
</feature>
<feature type="sequence conflict" description="In Ref. 2; AAG29823." evidence="9" ref="2">
    <original>I</original>
    <variation>V</variation>
    <location>
        <position position="21"/>
    </location>
</feature>
<feature type="sequence conflict" description="In Ref. 2; AAG29823." evidence="9" ref="2">
    <original>KFRSSQ</original>
    <variation>RSRGSL</variation>
    <location>
        <begin position="26"/>
        <end position="31"/>
    </location>
</feature>
<feature type="sequence conflict" description="In Ref. 2; AAG29823." evidence="9" ref="2">
    <original>V</original>
    <variation>A</variation>
    <location>
        <position position="49"/>
    </location>
</feature>
<feature type="sequence conflict" description="In Ref. 2; AAG29823." evidence="9" ref="2">
    <original>R</original>
    <variation>P</variation>
    <location>
        <position position="72"/>
    </location>
</feature>
<feature type="sequence conflict" description="In Ref. 2; AAG29823." evidence="9" ref="2">
    <original>L</original>
    <variation>TR</variation>
    <location>
        <position position="79"/>
    </location>
</feature>
<feature type="sequence conflict" description="In Ref. 2; AAG29823." evidence="9" ref="2">
    <original>R</original>
    <variation>G</variation>
    <location>
        <position position="249"/>
    </location>
</feature>
<feature type="sequence conflict" description="In Ref. 2; AAG29823." evidence="9" ref="2">
    <original>TMLV</original>
    <variation>NLLK</variation>
    <location>
        <begin position="262"/>
        <end position="265"/>
    </location>
</feature>
<feature type="sequence conflict" description="In Ref. 2; AAG29823." evidence="9" ref="2">
    <original>S</original>
    <variation>F</variation>
    <location>
        <position position="607"/>
    </location>
</feature>
<feature type="sequence conflict" description="In Ref. 2; AAG29823." evidence="9" ref="2">
    <original>L</original>
    <variation>V</variation>
    <location>
        <position position="936"/>
    </location>
</feature>
<feature type="sequence conflict" description="In Ref. 2; AAG29823." evidence="9" ref="2">
    <original>I</original>
    <variation>T</variation>
    <location>
        <position position="962"/>
    </location>
</feature>
<name>ATS1_RAT</name>
<organism>
    <name type="scientific">Rattus norvegicus</name>
    <name type="common">Rat</name>
    <dbReference type="NCBI Taxonomy" id="10116"/>
    <lineage>
        <taxon>Eukaryota</taxon>
        <taxon>Metazoa</taxon>
        <taxon>Chordata</taxon>
        <taxon>Craniata</taxon>
        <taxon>Vertebrata</taxon>
        <taxon>Euteleostomi</taxon>
        <taxon>Mammalia</taxon>
        <taxon>Eutheria</taxon>
        <taxon>Euarchontoglires</taxon>
        <taxon>Glires</taxon>
        <taxon>Rodentia</taxon>
        <taxon>Myomorpha</taxon>
        <taxon>Muroidea</taxon>
        <taxon>Muridae</taxon>
        <taxon>Murinae</taxon>
        <taxon>Rattus</taxon>
    </lineage>
</organism>
<dbReference type="EC" id="3.4.24.-"/>
<dbReference type="EMBL" id="AF149118">
    <property type="protein sequence ID" value="AAD34012.1"/>
    <property type="molecule type" value="mRNA"/>
</dbReference>
<dbReference type="EMBL" id="AF304446">
    <property type="protein sequence ID" value="AAG29823.1"/>
    <property type="molecule type" value="mRNA"/>
</dbReference>
<dbReference type="SMR" id="Q9WUQ1"/>
<dbReference type="FunCoup" id="Q9WUQ1">
    <property type="interactions" value="1064"/>
</dbReference>
<dbReference type="STRING" id="10116.ENSRNOP00000002187"/>
<dbReference type="MEROPS" id="M12.222"/>
<dbReference type="GlyCosmos" id="Q9WUQ1">
    <property type="glycosylation" value="5 sites, No reported glycans"/>
</dbReference>
<dbReference type="GlyGen" id="Q9WUQ1">
    <property type="glycosylation" value="5 sites"/>
</dbReference>
<dbReference type="PhosphoSitePlus" id="Q9WUQ1"/>
<dbReference type="PaxDb" id="10116-ENSRNOP00000002187"/>
<dbReference type="UCSC" id="RGD:621241">
    <property type="organism name" value="rat"/>
</dbReference>
<dbReference type="AGR" id="RGD:621241"/>
<dbReference type="RGD" id="621241">
    <property type="gene designation" value="Adamts1"/>
</dbReference>
<dbReference type="eggNOG" id="KOG3538">
    <property type="taxonomic scope" value="Eukaryota"/>
</dbReference>
<dbReference type="InParanoid" id="Q9WUQ1"/>
<dbReference type="OrthoDB" id="412680at2759"/>
<dbReference type="PhylomeDB" id="Q9WUQ1"/>
<dbReference type="BRENDA" id="3.4.24.B11">
    <property type="organism ID" value="5301"/>
</dbReference>
<dbReference type="Reactome" id="R-RNO-5173214">
    <property type="pathway name" value="O-glycosylation of TSR domain-containing proteins"/>
</dbReference>
<dbReference type="PRO" id="PR:Q9WUQ1"/>
<dbReference type="Proteomes" id="UP000002494">
    <property type="component" value="Unplaced"/>
</dbReference>
<dbReference type="GO" id="GO:0005604">
    <property type="term" value="C:basement membrane"/>
    <property type="evidence" value="ECO:0000266"/>
    <property type="project" value="RGD"/>
</dbReference>
<dbReference type="GO" id="GO:0031410">
    <property type="term" value="C:cytoplasmic vesicle"/>
    <property type="evidence" value="ECO:0000266"/>
    <property type="project" value="RGD"/>
</dbReference>
<dbReference type="GO" id="GO:0031012">
    <property type="term" value="C:extracellular matrix"/>
    <property type="evidence" value="ECO:0000266"/>
    <property type="project" value="RGD"/>
</dbReference>
<dbReference type="GO" id="GO:0005576">
    <property type="term" value="C:extracellular region"/>
    <property type="evidence" value="ECO:0007669"/>
    <property type="project" value="UniProtKB-KW"/>
</dbReference>
<dbReference type="GO" id="GO:0008201">
    <property type="term" value="F:heparin binding"/>
    <property type="evidence" value="ECO:0000266"/>
    <property type="project" value="RGD"/>
</dbReference>
<dbReference type="GO" id="GO:0004222">
    <property type="term" value="F:metalloendopeptidase activity"/>
    <property type="evidence" value="ECO:0000250"/>
    <property type="project" value="UniProtKB"/>
</dbReference>
<dbReference type="GO" id="GO:0008270">
    <property type="term" value="F:zinc ion binding"/>
    <property type="evidence" value="ECO:0007669"/>
    <property type="project" value="InterPro"/>
</dbReference>
<dbReference type="GO" id="GO:0071374">
    <property type="term" value="P:cellular response to parathyroid hormone stimulus"/>
    <property type="evidence" value="ECO:0000270"/>
    <property type="project" value="RGD"/>
</dbReference>
<dbReference type="GO" id="GO:0071380">
    <property type="term" value="P:cellular response to prostaglandin E stimulus"/>
    <property type="evidence" value="ECO:0000270"/>
    <property type="project" value="RGD"/>
</dbReference>
<dbReference type="GO" id="GO:0071305">
    <property type="term" value="P:cellular response to vitamin D"/>
    <property type="evidence" value="ECO:0000270"/>
    <property type="project" value="RGD"/>
</dbReference>
<dbReference type="GO" id="GO:0030198">
    <property type="term" value="P:extracellular matrix organization"/>
    <property type="evidence" value="ECO:0000318"/>
    <property type="project" value="GO_Central"/>
</dbReference>
<dbReference type="GO" id="GO:0060347">
    <property type="term" value="P:heart trabecula formation"/>
    <property type="evidence" value="ECO:0000266"/>
    <property type="project" value="RGD"/>
</dbReference>
<dbReference type="GO" id="GO:0001822">
    <property type="term" value="P:kidney development"/>
    <property type="evidence" value="ECO:0000266"/>
    <property type="project" value="RGD"/>
</dbReference>
<dbReference type="GO" id="GO:0016525">
    <property type="term" value="P:negative regulation of angiogenesis"/>
    <property type="evidence" value="ECO:0000266"/>
    <property type="project" value="RGD"/>
</dbReference>
<dbReference type="GO" id="GO:0001542">
    <property type="term" value="P:ovulation from ovarian follicle"/>
    <property type="evidence" value="ECO:0000266"/>
    <property type="project" value="RGD"/>
</dbReference>
<dbReference type="GO" id="GO:1900087">
    <property type="term" value="P:positive regulation of G1/S transition of mitotic cell cycle"/>
    <property type="evidence" value="ECO:0000266"/>
    <property type="project" value="RGD"/>
</dbReference>
<dbReference type="GO" id="GO:0010976">
    <property type="term" value="P:positive regulation of neuron projection development"/>
    <property type="evidence" value="ECO:0000315"/>
    <property type="project" value="RGD"/>
</dbReference>
<dbReference type="GO" id="GO:1904754">
    <property type="term" value="P:positive regulation of vascular associated smooth muscle cell migration"/>
    <property type="evidence" value="ECO:0000266"/>
    <property type="project" value="RGD"/>
</dbReference>
<dbReference type="GO" id="GO:1904707">
    <property type="term" value="P:positive regulation of vascular associated smooth muscle cell proliferation"/>
    <property type="evidence" value="ECO:0000266"/>
    <property type="project" value="RGD"/>
</dbReference>
<dbReference type="GO" id="GO:0006508">
    <property type="term" value="P:proteolysis"/>
    <property type="evidence" value="ECO:0000318"/>
    <property type="project" value="GO_Central"/>
</dbReference>
<dbReference type="CDD" id="cd04273">
    <property type="entry name" value="ZnMc_ADAMTS_like"/>
    <property type="match status" value="1"/>
</dbReference>
<dbReference type="FunFam" id="2.20.100.10:FF:000006">
    <property type="entry name" value="A disintegrin and metalloproteinase with thrombospondin motifs 1"/>
    <property type="match status" value="1"/>
</dbReference>
<dbReference type="FunFam" id="2.60.120.830:FF:000001">
    <property type="entry name" value="A disintegrin and metalloproteinase with thrombospondin motifs 1"/>
    <property type="match status" value="1"/>
</dbReference>
<dbReference type="FunFam" id="3.40.1620.60:FF:000003">
    <property type="entry name" value="A disintegrin and metalloproteinase with thrombospondin motifs 1"/>
    <property type="match status" value="1"/>
</dbReference>
<dbReference type="FunFam" id="3.40.390.10:FF:000001">
    <property type="entry name" value="A disintegrin and metalloproteinase with thrombospondin motifs 1"/>
    <property type="match status" value="1"/>
</dbReference>
<dbReference type="FunFam" id="2.20.100.10:FF:000048">
    <property type="entry name" value="ADAM metallopeptidase with thrombospondin type 1 motif 8"/>
    <property type="match status" value="1"/>
</dbReference>
<dbReference type="FunFam" id="2.20.100.10:FF:000005">
    <property type="entry name" value="ADAM metallopeptidase with thrombospondin type 1 motif 9"/>
    <property type="match status" value="1"/>
</dbReference>
<dbReference type="Gene3D" id="2.60.120.830">
    <property type="match status" value="1"/>
</dbReference>
<dbReference type="Gene3D" id="3.40.1620.60">
    <property type="match status" value="1"/>
</dbReference>
<dbReference type="Gene3D" id="3.40.390.10">
    <property type="entry name" value="Collagenase (Catalytic Domain)"/>
    <property type="match status" value="1"/>
</dbReference>
<dbReference type="Gene3D" id="2.20.100.10">
    <property type="entry name" value="Thrombospondin type-1 (TSP1) repeat"/>
    <property type="match status" value="3"/>
</dbReference>
<dbReference type="InterPro" id="IPR006586">
    <property type="entry name" value="ADAM_Cys-rich"/>
</dbReference>
<dbReference type="InterPro" id="IPR013273">
    <property type="entry name" value="ADAMTS/ADAMTS-like"/>
</dbReference>
<dbReference type="InterPro" id="IPR050439">
    <property type="entry name" value="ADAMTS_ADAMTS-like"/>
</dbReference>
<dbReference type="InterPro" id="IPR041645">
    <property type="entry name" value="ADAMTS_CR_2"/>
</dbReference>
<dbReference type="InterPro" id="IPR045371">
    <property type="entry name" value="ADAMTS_CR_3"/>
</dbReference>
<dbReference type="InterPro" id="IPR010294">
    <property type="entry name" value="ADAMTS_spacer1"/>
</dbReference>
<dbReference type="InterPro" id="IPR024079">
    <property type="entry name" value="MetalloPept_cat_dom_sf"/>
</dbReference>
<dbReference type="InterPro" id="IPR013274">
    <property type="entry name" value="Pept_M12B_ADAM-TS1"/>
</dbReference>
<dbReference type="InterPro" id="IPR001590">
    <property type="entry name" value="Peptidase_M12B"/>
</dbReference>
<dbReference type="InterPro" id="IPR002870">
    <property type="entry name" value="Peptidase_M12B_N"/>
</dbReference>
<dbReference type="InterPro" id="IPR000884">
    <property type="entry name" value="TSP1_rpt"/>
</dbReference>
<dbReference type="InterPro" id="IPR036383">
    <property type="entry name" value="TSP1_rpt_sf"/>
</dbReference>
<dbReference type="PANTHER" id="PTHR13723:SF40">
    <property type="entry name" value="A DISINTEGRIN AND METALLOPROTEINASE WITH THROMBOSPONDIN MOTIFS 1"/>
    <property type="match status" value="1"/>
</dbReference>
<dbReference type="PANTHER" id="PTHR13723">
    <property type="entry name" value="ADAMTS A DISINTEGRIN AND METALLOPROTEASE WITH THROMBOSPONDIN MOTIFS PROTEASE"/>
    <property type="match status" value="1"/>
</dbReference>
<dbReference type="Pfam" id="PF17771">
    <property type="entry name" value="ADAMTS_CR_2"/>
    <property type="match status" value="1"/>
</dbReference>
<dbReference type="Pfam" id="PF19236">
    <property type="entry name" value="ADAMTS_CR_3"/>
    <property type="match status" value="1"/>
</dbReference>
<dbReference type="Pfam" id="PF05986">
    <property type="entry name" value="ADAMTS_spacer1"/>
    <property type="match status" value="1"/>
</dbReference>
<dbReference type="Pfam" id="PF01562">
    <property type="entry name" value="Pep_M12B_propep"/>
    <property type="match status" value="1"/>
</dbReference>
<dbReference type="Pfam" id="PF01421">
    <property type="entry name" value="Reprolysin"/>
    <property type="match status" value="1"/>
</dbReference>
<dbReference type="Pfam" id="PF19030">
    <property type="entry name" value="TSP1_ADAMTS"/>
    <property type="match status" value="2"/>
</dbReference>
<dbReference type="Pfam" id="PF00090">
    <property type="entry name" value="TSP_1"/>
    <property type="match status" value="1"/>
</dbReference>
<dbReference type="PRINTS" id="PR01858">
    <property type="entry name" value="ADAMTS1"/>
</dbReference>
<dbReference type="PRINTS" id="PR01857">
    <property type="entry name" value="ADAMTSFAMILY"/>
</dbReference>
<dbReference type="PRINTS" id="PR01705">
    <property type="entry name" value="TSP1REPEAT"/>
</dbReference>
<dbReference type="SMART" id="SM00608">
    <property type="entry name" value="ACR"/>
    <property type="match status" value="1"/>
</dbReference>
<dbReference type="SMART" id="SM00209">
    <property type="entry name" value="TSP1"/>
    <property type="match status" value="3"/>
</dbReference>
<dbReference type="SUPFAM" id="SSF55486">
    <property type="entry name" value="Metalloproteases ('zincins'), catalytic domain"/>
    <property type="match status" value="1"/>
</dbReference>
<dbReference type="SUPFAM" id="SSF82895">
    <property type="entry name" value="TSP-1 type 1 repeat"/>
    <property type="match status" value="3"/>
</dbReference>
<dbReference type="PROSITE" id="PS50215">
    <property type="entry name" value="ADAM_MEPRO"/>
    <property type="match status" value="1"/>
</dbReference>
<dbReference type="PROSITE" id="PS50092">
    <property type="entry name" value="TSP1"/>
    <property type="match status" value="3"/>
</dbReference>
<dbReference type="PROSITE" id="PS00142">
    <property type="entry name" value="ZINC_PROTEASE"/>
    <property type="match status" value="1"/>
</dbReference>
<accession>Q9WUQ1</accession>
<accession>Q9ERI1</accession>